<protein>
    <recommendedName>
        <fullName evidence="4">Large ribosomal subunit protein uL24c</fullName>
    </recommendedName>
    <alternativeName>
        <fullName evidence="3">50S ribosomal protein L24, chloroplastic</fullName>
    </alternativeName>
    <alternativeName>
        <fullName>CL24</fullName>
    </alternativeName>
</protein>
<keyword id="KW-0002">3D-structure</keyword>
<keyword id="KW-0150">Chloroplast</keyword>
<keyword id="KW-0903">Direct protein sequencing</keyword>
<keyword id="KW-0934">Plastid</keyword>
<keyword id="KW-1185">Reference proteome</keyword>
<keyword id="KW-0687">Ribonucleoprotein</keyword>
<keyword id="KW-0689">Ribosomal protein</keyword>
<keyword id="KW-0694">RNA-binding</keyword>
<keyword id="KW-0699">rRNA-binding</keyword>
<keyword id="KW-0809">Transit peptide</keyword>
<organism>
    <name type="scientific">Spinacia oleracea</name>
    <name type="common">Spinach</name>
    <dbReference type="NCBI Taxonomy" id="3562"/>
    <lineage>
        <taxon>Eukaryota</taxon>
        <taxon>Viridiplantae</taxon>
        <taxon>Streptophyta</taxon>
        <taxon>Embryophyta</taxon>
        <taxon>Tracheophyta</taxon>
        <taxon>Spermatophyta</taxon>
        <taxon>Magnoliopsida</taxon>
        <taxon>eudicotyledons</taxon>
        <taxon>Gunneridae</taxon>
        <taxon>Pentapetalae</taxon>
        <taxon>Caryophyllales</taxon>
        <taxon>Chenopodiaceae</taxon>
        <taxon>Chenopodioideae</taxon>
        <taxon>Anserineae</taxon>
        <taxon>Spinacia</taxon>
    </lineage>
</organism>
<name>RK24_SPIOL</name>
<sequence>MAAMAALQSSFTSLSLSSNSFLGQRLFPSPTTLQVKTEGHSPCLIVMRIKRWERKDCKPNSLPKLHKMHVKVGDTVKVISGGEKGKIGEISKIHKHNSTVIIKDLNLKTKHVKSKEEGEQGQIIKIEAAIHSSNVMLYSKEQEVASRVGHKILEDGRKVRYLIKTGEIVDTPDRWKEIQNKKESETAVAVAA</sequence>
<dbReference type="EMBL" id="M58522">
    <property type="protein sequence ID" value="AAA34042.1"/>
    <property type="molecule type" value="mRNA"/>
</dbReference>
<dbReference type="EMBL" id="X13154">
    <property type="protein sequence ID" value="CAA31552.1"/>
    <property type="molecule type" value="mRNA"/>
</dbReference>
<dbReference type="EMBL" id="KQ185264">
    <property type="protein sequence ID" value="KNA06132.1"/>
    <property type="molecule type" value="Genomic_DNA"/>
</dbReference>
<dbReference type="PIR" id="JH0585">
    <property type="entry name" value="JH0585"/>
</dbReference>
<dbReference type="PDB" id="4V61">
    <property type="method" value="EM"/>
    <property type="resolution" value="9.40 A"/>
    <property type="chains" value="BW=1-192"/>
</dbReference>
<dbReference type="PDB" id="5H1S">
    <property type="method" value="EM"/>
    <property type="resolution" value="3.50 A"/>
    <property type="chains" value="W=48-192"/>
</dbReference>
<dbReference type="PDB" id="5MLC">
    <property type="method" value="EM"/>
    <property type="resolution" value="3.90 A"/>
    <property type="chains" value="W=1-192"/>
</dbReference>
<dbReference type="PDB" id="5MMI">
    <property type="method" value="EM"/>
    <property type="resolution" value="3.25 A"/>
    <property type="chains" value="V=1-192"/>
</dbReference>
<dbReference type="PDB" id="5MMM">
    <property type="method" value="EM"/>
    <property type="resolution" value="3.40 A"/>
    <property type="chains" value="V=1-192"/>
</dbReference>
<dbReference type="PDB" id="5X8P">
    <property type="method" value="EM"/>
    <property type="resolution" value="3.40 A"/>
    <property type="chains" value="V=48-192"/>
</dbReference>
<dbReference type="PDB" id="5X8T">
    <property type="method" value="EM"/>
    <property type="resolution" value="3.30 A"/>
    <property type="chains" value="V=48-192"/>
</dbReference>
<dbReference type="PDB" id="6ERI">
    <property type="method" value="EM"/>
    <property type="resolution" value="3.00 A"/>
    <property type="chains" value="AU=49-175"/>
</dbReference>
<dbReference type="PDBsum" id="4V61"/>
<dbReference type="PDBsum" id="5H1S"/>
<dbReference type="PDBsum" id="5MLC"/>
<dbReference type="PDBsum" id="5MMI"/>
<dbReference type="PDBsum" id="5MMM"/>
<dbReference type="PDBsum" id="5X8P"/>
<dbReference type="PDBsum" id="5X8T"/>
<dbReference type="PDBsum" id="6ERI"/>
<dbReference type="EMDB" id="EMD-3525"/>
<dbReference type="EMDB" id="EMD-3531"/>
<dbReference type="EMDB" id="EMD-3533"/>
<dbReference type="EMDB" id="EMD-3941"/>
<dbReference type="EMDB" id="EMD-6709"/>
<dbReference type="EMDB" id="EMD-6711"/>
<dbReference type="SMR" id="P27683"/>
<dbReference type="IntAct" id="P27683">
    <property type="interactions" value="1"/>
</dbReference>
<dbReference type="STRING" id="3562.P27683"/>
<dbReference type="Proteomes" id="UP001155700">
    <property type="component" value="Unplaced"/>
</dbReference>
<dbReference type="GO" id="GO:0009507">
    <property type="term" value="C:chloroplast"/>
    <property type="evidence" value="ECO:0007669"/>
    <property type="project" value="UniProtKB-SubCell"/>
</dbReference>
<dbReference type="GO" id="GO:0005739">
    <property type="term" value="C:mitochondrion"/>
    <property type="evidence" value="ECO:0000318"/>
    <property type="project" value="GO_Central"/>
</dbReference>
<dbReference type="GO" id="GO:1990904">
    <property type="term" value="C:ribonucleoprotein complex"/>
    <property type="evidence" value="ECO:0007669"/>
    <property type="project" value="UniProtKB-KW"/>
</dbReference>
<dbReference type="GO" id="GO:0005840">
    <property type="term" value="C:ribosome"/>
    <property type="evidence" value="ECO:0007669"/>
    <property type="project" value="UniProtKB-KW"/>
</dbReference>
<dbReference type="GO" id="GO:0019843">
    <property type="term" value="F:rRNA binding"/>
    <property type="evidence" value="ECO:0007669"/>
    <property type="project" value="UniProtKB-KW"/>
</dbReference>
<dbReference type="GO" id="GO:0003735">
    <property type="term" value="F:structural constituent of ribosome"/>
    <property type="evidence" value="ECO:0007669"/>
    <property type="project" value="InterPro"/>
</dbReference>
<dbReference type="GO" id="GO:0006412">
    <property type="term" value="P:translation"/>
    <property type="evidence" value="ECO:0000318"/>
    <property type="project" value="GO_Central"/>
</dbReference>
<dbReference type="CDD" id="cd06089">
    <property type="entry name" value="KOW_RPL26"/>
    <property type="match status" value="1"/>
</dbReference>
<dbReference type="Gene3D" id="2.30.30.30">
    <property type="match status" value="1"/>
</dbReference>
<dbReference type="HAMAP" id="MF_01326_B">
    <property type="entry name" value="Ribosomal_uL24_B"/>
    <property type="match status" value="1"/>
</dbReference>
<dbReference type="InterPro" id="IPR005824">
    <property type="entry name" value="KOW"/>
</dbReference>
<dbReference type="InterPro" id="IPR014722">
    <property type="entry name" value="Rib_uL2_dom2"/>
</dbReference>
<dbReference type="InterPro" id="IPR003256">
    <property type="entry name" value="Ribosomal_uL24"/>
</dbReference>
<dbReference type="InterPro" id="IPR005825">
    <property type="entry name" value="Ribosomal_uL24_CS"/>
</dbReference>
<dbReference type="InterPro" id="IPR041988">
    <property type="entry name" value="Ribosomal_uL24_KOW"/>
</dbReference>
<dbReference type="InterPro" id="IPR008991">
    <property type="entry name" value="Translation_prot_SH3-like_sf"/>
</dbReference>
<dbReference type="NCBIfam" id="TIGR01079">
    <property type="entry name" value="rplX_bact"/>
    <property type="match status" value="1"/>
</dbReference>
<dbReference type="PANTHER" id="PTHR12903">
    <property type="entry name" value="MITOCHONDRIAL RIBOSOMAL PROTEIN L24"/>
    <property type="match status" value="1"/>
</dbReference>
<dbReference type="Pfam" id="PF00467">
    <property type="entry name" value="KOW"/>
    <property type="match status" value="1"/>
</dbReference>
<dbReference type="Pfam" id="PF17136">
    <property type="entry name" value="ribosomal_L24"/>
    <property type="match status" value="1"/>
</dbReference>
<dbReference type="SMART" id="SM00739">
    <property type="entry name" value="KOW"/>
    <property type="match status" value="1"/>
</dbReference>
<dbReference type="SUPFAM" id="SSF50104">
    <property type="entry name" value="Translation proteins SH3-like domain"/>
    <property type="match status" value="1"/>
</dbReference>
<dbReference type="PROSITE" id="PS01108">
    <property type="entry name" value="RIBOSOMAL_L24"/>
    <property type="match status" value="1"/>
</dbReference>
<gene>
    <name type="primary">RPL24</name>
    <name type="ORF">SOVF_183870</name>
</gene>
<evidence type="ECO:0000269" key="1">
    <source>
    </source>
</evidence>
<evidence type="ECO:0000269" key="2">
    <source>
    </source>
</evidence>
<evidence type="ECO:0000303" key="3">
    <source>
    </source>
</evidence>
<evidence type="ECO:0000303" key="4">
    <source>
    </source>
</evidence>
<evidence type="ECO:0000305" key="5"/>
<evidence type="ECO:0000305" key="6">
    <source>
    </source>
</evidence>
<evidence type="ECO:0000305" key="7">
    <source>
    </source>
</evidence>
<evidence type="ECO:0007829" key="8">
    <source>
        <dbReference type="PDB" id="5MMI"/>
    </source>
</evidence>
<evidence type="ECO:0007829" key="9">
    <source>
        <dbReference type="PDB" id="5X8T"/>
    </source>
</evidence>
<feature type="transit peptide" description="Chloroplast" evidence="1">
    <location>
        <begin position="1"/>
        <end position="47"/>
    </location>
</feature>
<feature type="chain" id="PRO_0000030491" description="Large ribosomal subunit protein uL24c">
    <location>
        <begin position="48"/>
        <end position="192"/>
    </location>
</feature>
<feature type="sequence conflict" description="In Ref. 1; AAA34042 and 2; CAA31552." evidence="5" ref="1 2">
    <original>AA</original>
    <variation>V</variation>
    <location>
        <begin position="5"/>
        <end position="6"/>
    </location>
</feature>
<feature type="sequence conflict" description="In Ref. 1; AAA34042 and 2; CAA31552." evidence="5" ref="1 2">
    <original>M</original>
    <variation>R</variation>
    <location>
        <position position="68"/>
    </location>
</feature>
<feature type="sequence conflict" description="In Ref. 1; AAA34042 and 2; CAA31552." evidence="5" ref="1 2">
    <original>L</original>
    <variation>F</variation>
    <location>
        <position position="107"/>
    </location>
</feature>
<feature type="sequence conflict" description="In Ref. 1; AAA34042 and 2; CAA31552." evidence="5" ref="1 2">
    <original>YS</original>
    <variation>IL</variation>
    <location>
        <begin position="138"/>
        <end position="139"/>
    </location>
</feature>
<feature type="sequence conflict" description="In Ref. 1; AAA34042 and 2; CAA31552." evidence="5" ref="1 2">
    <original>S</original>
    <variation>D</variation>
    <location>
        <position position="146"/>
    </location>
</feature>
<feature type="sequence conflict" description="In Ref. 1; AAA34042 and 2; CAA31552." evidence="5" ref="1 2">
    <original>G</original>
    <variation>V</variation>
    <location>
        <position position="156"/>
    </location>
</feature>
<feature type="helix" evidence="9">
    <location>
        <begin position="52"/>
        <end position="54"/>
    </location>
</feature>
<feature type="helix" evidence="9">
    <location>
        <begin position="59"/>
        <end position="61"/>
    </location>
</feature>
<feature type="strand" evidence="8">
    <location>
        <begin position="75"/>
        <end position="78"/>
    </location>
</feature>
<feature type="turn" evidence="8">
    <location>
        <begin position="82"/>
        <end position="85"/>
    </location>
</feature>
<feature type="strand" evidence="8">
    <location>
        <begin position="87"/>
        <end position="94"/>
    </location>
</feature>
<feature type="turn" evidence="8">
    <location>
        <begin position="95"/>
        <end position="98"/>
    </location>
</feature>
<feature type="strand" evidence="8">
    <location>
        <begin position="99"/>
        <end position="102"/>
    </location>
</feature>
<feature type="strand" evidence="8">
    <location>
        <begin position="105"/>
        <end position="127"/>
    </location>
</feature>
<feature type="helix" evidence="8">
    <location>
        <begin position="132"/>
        <end position="134"/>
    </location>
</feature>
<feature type="strand" evidence="8">
    <location>
        <begin position="135"/>
        <end position="139"/>
    </location>
</feature>
<feature type="turn" evidence="8">
    <location>
        <begin position="140"/>
        <end position="143"/>
    </location>
</feature>
<feature type="strand" evidence="8">
    <location>
        <begin position="144"/>
        <end position="146"/>
    </location>
</feature>
<feature type="strand" evidence="8">
    <location>
        <begin position="148"/>
        <end position="153"/>
    </location>
</feature>
<feature type="turn" evidence="8">
    <location>
        <begin position="154"/>
        <end position="156"/>
    </location>
</feature>
<feature type="strand" evidence="8">
    <location>
        <begin position="157"/>
        <end position="162"/>
    </location>
</feature>
<feature type="turn" evidence="8">
    <location>
        <begin position="163"/>
        <end position="165"/>
    </location>
</feature>
<feature type="helix" evidence="8">
    <location>
        <begin position="174"/>
        <end position="179"/>
    </location>
</feature>
<reference key="1">
    <citation type="journal article" date="1991" name="Gene">
        <title>Conservation and evolution of the nucleus-encoded and chloroplast-specific ribosomal proteins in pea and spinach.</title>
        <authorList>
            <person name="Carol P."/>
            <person name="Li Y.F."/>
            <person name="Mache R."/>
        </authorList>
    </citation>
    <scope>NUCLEOTIDE SEQUENCE [MRNA]</scope>
</reference>
<reference key="2">
    <citation type="submission" date="1988-10" db="EMBL/GenBank/DDBJ databases">
        <title>Analysis of two full length cDNAs coding for chloroplast precursor ribosomal proteins homologous to the E. coli L12 and L24 ribosomal proteins respectively.</title>
        <authorList>
            <person name="Li Y."/>
            <person name="Zhou D.X."/>
            <person name="Seyer P."/>
            <person name="Massenet O."/>
            <person name="Dorne A.M."/>
            <person name="Mache R."/>
        </authorList>
    </citation>
    <scope>NUCLEOTIDE SEQUENCE [MRNA]</scope>
    <source>
        <tissue>Leaf</tissue>
    </source>
</reference>
<reference key="3">
    <citation type="journal article" date="2014" name="Nature">
        <title>The genome of the recently domesticated crop plant sugar beet (Beta vulgaris).</title>
        <authorList>
            <person name="Dohm J.C."/>
            <person name="Minoche A.E."/>
            <person name="Holtgraewe D."/>
            <person name="Capella-Gutierrez S."/>
            <person name="Zakrzewski F."/>
            <person name="Tafer H."/>
            <person name="Rupp O."/>
            <person name="Soerensen T.R."/>
            <person name="Stracke R."/>
            <person name="Reinhardt R."/>
            <person name="Goesmann A."/>
            <person name="Kraft T."/>
            <person name="Schulz B."/>
            <person name="Stadler P.F."/>
            <person name="Schmidt T."/>
            <person name="Gabaldon T."/>
            <person name="Lehrach H."/>
            <person name="Weisshaar B."/>
            <person name="Himmelbauer H."/>
        </authorList>
    </citation>
    <scope>NUCLEOTIDE SEQUENCE [LARGE SCALE GENOMIC DNA]</scope>
    <source>
        <strain>cv. Viroflay</strain>
        <tissue>Leaf</tissue>
    </source>
</reference>
<reference key="4">
    <citation type="journal article" date="2000" name="J. Biol. Chem.">
        <title>The plastid ribosomal proteins. Identification of all the proteins in the 50S subunit of an organelle ribosome (chloroplast).</title>
        <authorList>
            <person name="Yamaguchi K."/>
            <person name="Subramanian A.R."/>
        </authorList>
    </citation>
    <scope>PROTEIN SEQUENCE OF 48-56</scope>
    <scope>SUBUNIT</scope>
    <scope>SUBCELLULAR LOCATION</scope>
    <scope>MASS SPECTROMETRY</scope>
    <source>
        <strain>cv. Alwaro</strain>
        <tissue>Leaf</tissue>
    </source>
</reference>
<reference key="5">
    <citation type="journal article" date="2007" name="Proc. Natl. Acad. Sci. U.S.A.">
        <title>Cryo-EM study of the spinach chloroplast ribosome reveals the structural and functional roles of plastid-specific ribosomal proteins.</title>
        <authorList>
            <person name="Sharma M.R."/>
            <person name="Wilson D.N."/>
            <person name="Datta P.P."/>
            <person name="Barat C."/>
            <person name="Schluenzen F."/>
            <person name="Fucini P."/>
            <person name="Agrawal R.K."/>
        </authorList>
    </citation>
    <scope>STRUCTURE BY ELECTRON MICROSCOPY (9.4 ANGSTROMS)</scope>
</reference>
<reference key="6">
    <citation type="journal article" date="2016" name="Sci. Rep.">
        <title>Cryo-EM structure of the large subunit of the spinach chloroplast ribosome.</title>
        <authorList>
            <person name="Ahmed T."/>
            <person name="Yin Z."/>
            <person name="Bhushan S."/>
        </authorList>
    </citation>
    <scope>STRUCTURE BY ELECTRON MICROSCOPY (3.50 ANGSTROMS)</scope>
</reference>
<reference key="7">
    <citation type="journal article" date="2017" name="EMBO J.">
        <title>The complete structure of the chloroplast 70S ribosome in complex with translation factor pY.</title>
        <authorList>
            <person name="Bieri P."/>
            <person name="Leibundgut M."/>
            <person name="Saurer M."/>
            <person name="Boehringer D."/>
            <person name="Ban N."/>
        </authorList>
    </citation>
    <scope>STRUCTURE BY ELECTRON MICROSCOPY (3.25 ANGSTROMS)</scope>
    <scope>SUBUNIT</scope>
    <scope>SUBCELLULAR LOCATION</scope>
</reference>
<proteinExistence type="evidence at protein level"/>
<comment type="function">
    <text evidence="6 7">Component of the chloroplast ribosome (chloro-ribosome), a dedicated translation machinery responsible for the synthesis of chloroplast genome-encoded proteins, including proteins of the transcription and translation machinery and components of the photosynthetic apparatus.</text>
</comment>
<comment type="subunit">
    <text evidence="1 2">Component of the chloroplast large ribosomal subunit (LSU). Mature 70S chloroplast ribosomes of higher plants consist of a small (30S) and a large (50S) subunit. The 30S small subunit contains 1 molecule of ribosomal RNA (16S rRNA) and 24 different proteins. The 50S large subunit contains 3 rRNA molecules (23S, 5S and 4.5S rRNA) and 33 different proteins.</text>
</comment>
<comment type="subcellular location">
    <subcellularLocation>
        <location evidence="1">Plastid</location>
        <location evidence="1">Chloroplast</location>
    </subcellularLocation>
</comment>
<comment type="mass spectrometry"/>
<comment type="similarity">
    <text evidence="5">Belongs to the universal ribosomal protein uL24 family.</text>
</comment>
<accession>P27683</accession>
<accession>A0A0K9QFU9</accession>
<accession>Q53WU0</accession>